<protein>
    <recommendedName>
        <fullName>ATP synthase subunit beta, mitochondrial</fullName>
        <ecNumber>7.1.2.2</ecNumber>
    </recommendedName>
</protein>
<reference key="1">
    <citation type="journal article" date="1992" name="Plant Mol. Biol.">
        <title>Nucleotide sequence of cDNA clones encoding the beta subunit of mitochondrial ATP synthase from the green alga Chlamydomonas reinhardtii: the precursor protein encoded by the cDNA contains both an N-terminal presequence and a C-terminal extension.</title>
        <authorList>
            <person name="Franzen L.-G."/>
            <person name="Falk G."/>
        </authorList>
    </citation>
    <scope>NUCLEOTIDE SEQUENCE [MRNA]</scope>
</reference>
<reference key="2">
    <citation type="journal article" date="1996" name="FEBS Lett.">
        <title>NMR structures of a mitochondrial transit peptide from the green alga Chlamydomonas reinhardtii.</title>
        <authorList>
            <person name="Lancelin J.-M."/>
            <person name="Gans P."/>
            <person name="Bouchayer E."/>
            <person name="Bally I."/>
            <person name="Arlaud G.J."/>
            <person name="Jacquot J.-P."/>
        </authorList>
    </citation>
    <scope>STRUCTURE BY NMR OF 1-26</scope>
</reference>
<evidence type="ECO:0000250" key="1"/>
<evidence type="ECO:0000255" key="2"/>
<evidence type="ECO:0000305" key="3"/>
<dbReference type="EC" id="7.1.2.2"/>
<dbReference type="EMBL" id="X61624">
    <property type="protein sequence ID" value="CAA43808.1"/>
    <property type="molecule type" value="mRNA"/>
</dbReference>
<dbReference type="PIR" id="S23530">
    <property type="entry name" value="S23530"/>
</dbReference>
<dbReference type="RefSeq" id="XP_001691632.1">
    <property type="nucleotide sequence ID" value="XM_001691580.1"/>
</dbReference>
<dbReference type="SMR" id="P38482"/>
<dbReference type="PaxDb" id="3055-EDP04740"/>
<dbReference type="ProMEX" id="P38482"/>
<dbReference type="EnsemblPlants" id="PNW69914">
    <property type="protein sequence ID" value="PNW69914"/>
    <property type="gene ID" value="CHLRE_17g698000v5"/>
</dbReference>
<dbReference type="Gramene" id="PNW69914">
    <property type="protein sequence ID" value="PNW69914"/>
    <property type="gene ID" value="CHLRE_17g698000v5"/>
</dbReference>
<dbReference type="KEGG" id="cre:CHLRE_17g698000v5"/>
<dbReference type="eggNOG" id="KOG1350">
    <property type="taxonomic scope" value="Eukaryota"/>
</dbReference>
<dbReference type="HOGENOM" id="CLU_022398_0_2_1"/>
<dbReference type="OMA" id="DTQSPIM"/>
<dbReference type="OrthoDB" id="149879at2759"/>
<dbReference type="GO" id="GO:0005743">
    <property type="term" value="C:mitochondrial inner membrane"/>
    <property type="evidence" value="ECO:0007669"/>
    <property type="project" value="UniProtKB-SubCell"/>
</dbReference>
<dbReference type="GO" id="GO:0045259">
    <property type="term" value="C:proton-transporting ATP synthase complex"/>
    <property type="evidence" value="ECO:0007669"/>
    <property type="project" value="UniProtKB-KW"/>
</dbReference>
<dbReference type="GO" id="GO:0005524">
    <property type="term" value="F:ATP binding"/>
    <property type="evidence" value="ECO:0007669"/>
    <property type="project" value="UniProtKB-KW"/>
</dbReference>
<dbReference type="GO" id="GO:0016887">
    <property type="term" value="F:ATP hydrolysis activity"/>
    <property type="evidence" value="ECO:0007669"/>
    <property type="project" value="InterPro"/>
</dbReference>
<dbReference type="GO" id="GO:0046933">
    <property type="term" value="F:proton-transporting ATP synthase activity, rotational mechanism"/>
    <property type="evidence" value="ECO:0007669"/>
    <property type="project" value="InterPro"/>
</dbReference>
<dbReference type="CDD" id="cd18110">
    <property type="entry name" value="ATP-synt_F1_beta_C"/>
    <property type="match status" value="1"/>
</dbReference>
<dbReference type="CDD" id="cd18115">
    <property type="entry name" value="ATP-synt_F1_beta_N"/>
    <property type="match status" value="1"/>
</dbReference>
<dbReference type="CDD" id="cd01133">
    <property type="entry name" value="F1-ATPase_beta_CD"/>
    <property type="match status" value="1"/>
</dbReference>
<dbReference type="FunFam" id="1.10.1140.10:FF:000001">
    <property type="entry name" value="ATP synthase subunit beta"/>
    <property type="match status" value="1"/>
</dbReference>
<dbReference type="FunFam" id="2.40.10.170:FF:000005">
    <property type="entry name" value="ATP synthase subunit beta"/>
    <property type="match status" value="1"/>
</dbReference>
<dbReference type="FunFam" id="3.40.50.12240:FF:000006">
    <property type="entry name" value="ATP synthase subunit beta"/>
    <property type="match status" value="1"/>
</dbReference>
<dbReference type="FunFam" id="3.40.50.300:FF:000026">
    <property type="entry name" value="ATP synthase subunit beta"/>
    <property type="match status" value="1"/>
</dbReference>
<dbReference type="Gene3D" id="2.40.10.170">
    <property type="match status" value="1"/>
</dbReference>
<dbReference type="Gene3D" id="1.10.1140.10">
    <property type="entry name" value="Bovine Mitochondrial F1-atpase, Atp Synthase Beta Chain, Chain D, domain 3"/>
    <property type="match status" value="1"/>
</dbReference>
<dbReference type="Gene3D" id="3.40.50.300">
    <property type="entry name" value="P-loop containing nucleotide triphosphate hydrolases"/>
    <property type="match status" value="1"/>
</dbReference>
<dbReference type="HAMAP" id="MF_01347">
    <property type="entry name" value="ATP_synth_beta_bact"/>
    <property type="match status" value="1"/>
</dbReference>
<dbReference type="InterPro" id="IPR003593">
    <property type="entry name" value="AAA+_ATPase"/>
</dbReference>
<dbReference type="InterPro" id="IPR055190">
    <property type="entry name" value="ATP-synt_VA_C"/>
</dbReference>
<dbReference type="InterPro" id="IPR005722">
    <property type="entry name" value="ATP_synth_F1_bsu"/>
</dbReference>
<dbReference type="InterPro" id="IPR020003">
    <property type="entry name" value="ATPase_a/bsu_AS"/>
</dbReference>
<dbReference type="InterPro" id="IPR050053">
    <property type="entry name" value="ATPase_alpha/beta_chains"/>
</dbReference>
<dbReference type="InterPro" id="IPR004100">
    <property type="entry name" value="ATPase_F1/V1/A1_a/bsu_N"/>
</dbReference>
<dbReference type="InterPro" id="IPR036121">
    <property type="entry name" value="ATPase_F1/V1/A1_a/bsu_N_sf"/>
</dbReference>
<dbReference type="InterPro" id="IPR000194">
    <property type="entry name" value="ATPase_F1/V1/A1_a/bsu_nucl-bd"/>
</dbReference>
<dbReference type="InterPro" id="IPR024034">
    <property type="entry name" value="ATPase_F1/V1_b/a_C"/>
</dbReference>
<dbReference type="InterPro" id="IPR027417">
    <property type="entry name" value="P-loop_NTPase"/>
</dbReference>
<dbReference type="NCBIfam" id="TIGR01039">
    <property type="entry name" value="atpD"/>
    <property type="match status" value="1"/>
</dbReference>
<dbReference type="PANTHER" id="PTHR15184">
    <property type="entry name" value="ATP SYNTHASE"/>
    <property type="match status" value="1"/>
</dbReference>
<dbReference type="PANTHER" id="PTHR15184:SF82">
    <property type="entry name" value="ATP SYNTHASE SUBUNIT BETA, MITOCHONDRIAL"/>
    <property type="match status" value="1"/>
</dbReference>
<dbReference type="Pfam" id="PF00006">
    <property type="entry name" value="ATP-synt_ab"/>
    <property type="match status" value="1"/>
</dbReference>
<dbReference type="Pfam" id="PF02874">
    <property type="entry name" value="ATP-synt_ab_N"/>
    <property type="match status" value="1"/>
</dbReference>
<dbReference type="Pfam" id="PF22919">
    <property type="entry name" value="ATP-synt_VA_C"/>
    <property type="match status" value="1"/>
</dbReference>
<dbReference type="PIRSF" id="PIRSF039072">
    <property type="entry name" value="ATPase_subunit_beta"/>
    <property type="match status" value="1"/>
</dbReference>
<dbReference type="SMART" id="SM00382">
    <property type="entry name" value="AAA"/>
    <property type="match status" value="1"/>
</dbReference>
<dbReference type="SUPFAM" id="SSF47917">
    <property type="entry name" value="C-terminal domain of alpha and beta subunits of F1 ATP synthase"/>
    <property type="match status" value="1"/>
</dbReference>
<dbReference type="SUPFAM" id="SSF50615">
    <property type="entry name" value="N-terminal domain of alpha and beta subunits of F1 ATP synthase"/>
    <property type="match status" value="1"/>
</dbReference>
<dbReference type="SUPFAM" id="SSF52540">
    <property type="entry name" value="P-loop containing nucleoside triphosphate hydrolases"/>
    <property type="match status" value="1"/>
</dbReference>
<dbReference type="PROSITE" id="PS00152">
    <property type="entry name" value="ATPASE_ALPHA_BETA"/>
    <property type="match status" value="1"/>
</dbReference>
<sequence length="574" mass="61821">MLSSVRLAALRAGKTNSVFQAVRAFAAEPAAAATTDAGFVSQVIGPVVDVRFDGELPSILSALEVQGHNVRLVLEVAQHMGDNTVRCVAMDSTDGLVRGQKVVNTGSPIKVPVGRGTLGRIMNVIGEPVDEQGPIECSEVWSIHREAPEFTEQSTEQEILVTGIKVVDLLAPYQRGGKIGLFGGAGVGKTVLIMELINNVAKAHGGFSVFAGVGERTREGNDLYREMIESGVIKLGDKRGESKCTLVYGQMNEPPGARARVALTGLTVAEYFRDVEGQDVLLFVDNIFRFTQANSEVSALLGRIPSAVGYQPTLATDLGGLQERITTTTKGSITSVQAVYVPADDLTDPAPATTFAHLDATTVLSRSIAELGIYPAVDPLDSTSRMLNPNIIGAEHYNIARGVQKVLQDYKNLQDIIAILGMDELSEEDKLTVARARKIQRFLSQPFQVAEVFTGTPGKYVDLKDTISAFTGILQGKYDDLPEMAFYMVGGIHEVVEKADKLAKDVAARKDESKKAKSSEALKDVPSLEKMAGEIKDEVIDADDSLEEDFKAEAISSENMVLNEKGEKVPLPKK</sequence>
<accession>P38482</accession>
<feature type="transit peptide" description="Mitochondrion" evidence="2">
    <location>
        <begin position="1"/>
        <end position="26"/>
    </location>
</feature>
<feature type="chain" id="PRO_0000002436" description="ATP synthase subunit beta, mitochondrial">
    <location>
        <begin position="27"/>
        <end position="574"/>
    </location>
</feature>
<feature type="binding site" evidence="1">
    <location>
        <begin position="183"/>
        <end position="190"/>
    </location>
    <ligand>
        <name>ATP</name>
        <dbReference type="ChEBI" id="CHEBI:30616"/>
    </ligand>
</feature>
<keyword id="KW-0066">ATP synthesis</keyword>
<keyword id="KW-0067">ATP-binding</keyword>
<keyword id="KW-0139">CF(1)</keyword>
<keyword id="KW-0375">Hydrogen ion transport</keyword>
<keyword id="KW-0406">Ion transport</keyword>
<keyword id="KW-0472">Membrane</keyword>
<keyword id="KW-0496">Mitochondrion</keyword>
<keyword id="KW-0999">Mitochondrion inner membrane</keyword>
<keyword id="KW-0547">Nucleotide-binding</keyword>
<keyword id="KW-0809">Transit peptide</keyword>
<keyword id="KW-1278">Translocase</keyword>
<keyword id="KW-0813">Transport</keyword>
<name>ATPBM_CHLRE</name>
<gene>
    <name type="primary">ATP2</name>
</gene>
<comment type="function">
    <text>Mitochondrial membrane ATP synthase (F(1)F(0) ATP synthase or Complex V) produces ATP from ADP in the presence of a proton gradient across the membrane which is generated by electron transport complexes of the respiratory chain. F-type ATPases consist of two structural domains, F(1) - containing the extramembraneous catalytic core, and F(0) - containing the membrane proton channel, linked together by a central stalk and a peripheral stalk. During catalysis, ATP synthesis in the catalytic domain of F(1) is coupled via a rotary mechanism of the central stalk subunits to proton translocation. Subunits alpha and beta form the catalytic core in F(1). Rotation of the central stalk against the surrounding alpha(3)beta(3) subunits leads to hydrolysis of ATP in three separate catalytic sites on the beta subunits.</text>
</comment>
<comment type="catalytic activity">
    <reaction>
        <text>ATP + H2O + 4 H(+)(in) = ADP + phosphate + 5 H(+)(out)</text>
        <dbReference type="Rhea" id="RHEA:57720"/>
        <dbReference type="ChEBI" id="CHEBI:15377"/>
        <dbReference type="ChEBI" id="CHEBI:15378"/>
        <dbReference type="ChEBI" id="CHEBI:30616"/>
        <dbReference type="ChEBI" id="CHEBI:43474"/>
        <dbReference type="ChEBI" id="CHEBI:456216"/>
        <dbReference type="EC" id="7.1.2.2"/>
    </reaction>
</comment>
<comment type="subunit">
    <text>F-type ATPases have 2 components, CF(1) - the catalytic core - and CF(0) - the membrane proton channel. CF(1) has five subunits: alpha(3), beta(3), gamma(1), delta(1), epsilon(1). CF(0) has three main subunits: a, b and c.</text>
</comment>
<comment type="subcellular location">
    <subcellularLocation>
        <location>Mitochondrion</location>
    </subcellularLocation>
    <subcellularLocation>
        <location>Mitochondrion inner membrane</location>
    </subcellularLocation>
    <text>Peripheral membrane protein.</text>
</comment>
<comment type="similarity">
    <text evidence="3">Belongs to the ATPase alpha/beta chains family.</text>
</comment>
<proteinExistence type="evidence at protein level"/>
<organism>
    <name type="scientific">Chlamydomonas reinhardtii</name>
    <name type="common">Chlamydomonas smithii</name>
    <dbReference type="NCBI Taxonomy" id="3055"/>
    <lineage>
        <taxon>Eukaryota</taxon>
        <taxon>Viridiplantae</taxon>
        <taxon>Chlorophyta</taxon>
        <taxon>core chlorophytes</taxon>
        <taxon>Chlorophyceae</taxon>
        <taxon>CS clade</taxon>
        <taxon>Chlamydomonadales</taxon>
        <taxon>Chlamydomonadaceae</taxon>
        <taxon>Chlamydomonas</taxon>
    </lineage>
</organism>